<evidence type="ECO:0000250" key="1"/>
<evidence type="ECO:0000250" key="2">
    <source>
        <dbReference type="UniProtKB" id="Q80WB5"/>
    </source>
</evidence>
<evidence type="ECO:0000250" key="3">
    <source>
        <dbReference type="UniProtKB" id="Q96HA8"/>
    </source>
</evidence>
<evidence type="ECO:0000305" key="4"/>
<name>NTAQ1_CAEEL</name>
<reference key="1">
    <citation type="journal article" date="1998" name="Science">
        <title>Genome sequence of the nematode C. elegans: a platform for investigating biology.</title>
        <authorList>
            <consortium name="The C. elegans sequencing consortium"/>
        </authorList>
    </citation>
    <scope>NUCLEOTIDE SEQUENCE [LARGE SCALE GENOMIC DNA]</scope>
    <source>
        <strain>Bristol N2</strain>
    </source>
</reference>
<proteinExistence type="inferred from homology"/>
<accession>Q21775</accession>
<protein>
    <recommendedName>
        <fullName>Protein N-terminal glutamine amidohydrolase</fullName>
        <ecNumber evidence="2">3.5.1.122</ecNumber>
    </recommendedName>
    <alternativeName>
        <fullName>Protein NH2-terminal glutamine deamidase</fullName>
        <shortName>N-terminal Gln amidase</shortName>
        <shortName>Nt(Q)-amidase</shortName>
    </alternativeName>
</protein>
<sequence>MISAEEALYQSCYCEENVYKLIEKIDDKNGIFAIIISNDCKMIPLWKQKAAKSINGHVLWDYHVIAIEKEKNGSKVYDLDSTLEWSCDFLEYWEKTMNLAEMAQRDTKFRRKFRVIPGENYISLLSSDRSHMLSKNGVYLKPPPEWPLINSHKPSNLMELIRMSEQIENTTVMDEPELFQLFSK</sequence>
<keyword id="KW-0378">Hydrolase</keyword>
<keyword id="KW-1185">Reference proteome</keyword>
<organism>
    <name type="scientific">Caenorhabditis elegans</name>
    <dbReference type="NCBI Taxonomy" id="6239"/>
    <lineage>
        <taxon>Eukaryota</taxon>
        <taxon>Metazoa</taxon>
        <taxon>Ecdysozoa</taxon>
        <taxon>Nematoda</taxon>
        <taxon>Chromadorea</taxon>
        <taxon>Rhabditida</taxon>
        <taxon>Rhabditina</taxon>
        <taxon>Rhabditomorpha</taxon>
        <taxon>Rhabditoidea</taxon>
        <taxon>Rhabditidae</taxon>
        <taxon>Peloderinae</taxon>
        <taxon>Caenorhabditis</taxon>
    </lineage>
</organism>
<feature type="chain" id="PRO_0000381821" description="Protein N-terminal glutamine amidohydrolase">
    <location>
        <begin position="1"/>
        <end position="184"/>
    </location>
</feature>
<feature type="active site" evidence="1">
    <location>
        <position position="14"/>
    </location>
</feature>
<feature type="active site" evidence="1">
    <location>
        <position position="63"/>
    </location>
</feature>
<feature type="active site" evidence="1">
    <location>
        <position position="78"/>
    </location>
</feature>
<comment type="function">
    <text evidence="2">Mediates the side-chain deamidation of N-terminal glutamine residues to glutamate, an important step in N-end rule pathway of protein degradation. Conversion of the resulting N-terminal glutamine to glutamate renders the protein susceptible to arginylation, polyubiquitination and degradation as specified by the N-end rule. Does not act on substrates with internal or C-terminal glutamine and does not act on non-glutamine residues in any position.</text>
</comment>
<comment type="catalytic activity">
    <reaction evidence="2">
        <text>N-terminal L-glutaminyl-[protein] + H2O = N-terminal L-glutamyl-[protein] + NH4(+)</text>
        <dbReference type="Rhea" id="RHEA:50680"/>
        <dbReference type="Rhea" id="RHEA-COMP:12668"/>
        <dbReference type="Rhea" id="RHEA-COMP:12777"/>
        <dbReference type="ChEBI" id="CHEBI:15377"/>
        <dbReference type="ChEBI" id="CHEBI:28938"/>
        <dbReference type="ChEBI" id="CHEBI:64721"/>
        <dbReference type="ChEBI" id="CHEBI:64722"/>
        <dbReference type="EC" id="3.5.1.122"/>
    </reaction>
</comment>
<comment type="subunit">
    <text evidence="3">Monomer.</text>
</comment>
<comment type="similarity">
    <text evidence="4">Belongs to the NTAQ1 family.</text>
</comment>
<dbReference type="EC" id="3.5.1.122" evidence="2"/>
<dbReference type="EMBL" id="Z71266">
    <property type="protein sequence ID" value="CAA95844.1"/>
    <property type="molecule type" value="Genomic_DNA"/>
</dbReference>
<dbReference type="PIR" id="T23970">
    <property type="entry name" value="T23970"/>
</dbReference>
<dbReference type="RefSeq" id="NP_492048.1">
    <property type="nucleotide sequence ID" value="NM_059647.2"/>
</dbReference>
<dbReference type="SMR" id="Q21775"/>
<dbReference type="FunCoup" id="Q21775">
    <property type="interactions" value="2312"/>
</dbReference>
<dbReference type="STRING" id="6239.R06C7.6.1"/>
<dbReference type="PaxDb" id="6239-R06C7.6"/>
<dbReference type="EnsemblMetazoa" id="R06C7.6.1">
    <property type="protein sequence ID" value="R06C7.6.1"/>
    <property type="gene ID" value="WBGene00011065"/>
</dbReference>
<dbReference type="GeneID" id="187641"/>
<dbReference type="KEGG" id="cel:CELE_R06C7.6"/>
<dbReference type="UCSC" id="R06C7.6">
    <property type="organism name" value="c. elegans"/>
</dbReference>
<dbReference type="AGR" id="WB:WBGene00011065"/>
<dbReference type="CTD" id="187641"/>
<dbReference type="WormBase" id="R06C7.6">
    <property type="protein sequence ID" value="CE06249"/>
    <property type="gene ID" value="WBGene00011065"/>
</dbReference>
<dbReference type="eggNOG" id="KOG3261">
    <property type="taxonomic scope" value="Eukaryota"/>
</dbReference>
<dbReference type="GeneTree" id="ENSGT00390000014398"/>
<dbReference type="HOGENOM" id="CLU_091083_1_0_1"/>
<dbReference type="InParanoid" id="Q21775"/>
<dbReference type="OMA" id="GWGTVYS"/>
<dbReference type="OrthoDB" id="191192at2759"/>
<dbReference type="PhylomeDB" id="Q21775"/>
<dbReference type="PRO" id="PR:Q21775"/>
<dbReference type="Proteomes" id="UP000001940">
    <property type="component" value="Chromosome I"/>
</dbReference>
<dbReference type="Bgee" id="WBGene00011065">
    <property type="expression patterns" value="Expressed in germ line (C elegans) and 4 other cell types or tissues"/>
</dbReference>
<dbReference type="GO" id="GO:0005829">
    <property type="term" value="C:cytosol"/>
    <property type="evidence" value="ECO:0000318"/>
    <property type="project" value="GO_Central"/>
</dbReference>
<dbReference type="GO" id="GO:0005634">
    <property type="term" value="C:nucleus"/>
    <property type="evidence" value="ECO:0000318"/>
    <property type="project" value="GO_Central"/>
</dbReference>
<dbReference type="GO" id="GO:0008418">
    <property type="term" value="F:protein-N-terminal asparagine amidohydrolase activity"/>
    <property type="evidence" value="ECO:0007669"/>
    <property type="project" value="InterPro"/>
</dbReference>
<dbReference type="GO" id="GO:0070773">
    <property type="term" value="F:protein-N-terminal glutamine amidohydrolase activity"/>
    <property type="evidence" value="ECO:0000318"/>
    <property type="project" value="GO_Central"/>
</dbReference>
<dbReference type="FunFam" id="3.10.620.10:FF:000002">
    <property type="entry name" value="Protein N-terminal glutamine amidohydrolase"/>
    <property type="match status" value="1"/>
</dbReference>
<dbReference type="Gene3D" id="3.10.620.10">
    <property type="entry name" value="Protein N-terminal glutamine amidohydrolase, alpha beta roll"/>
    <property type="match status" value="1"/>
</dbReference>
<dbReference type="InterPro" id="IPR037132">
    <property type="entry name" value="N_Gln_amidohydro_ab_roll_sf"/>
</dbReference>
<dbReference type="InterPro" id="IPR039733">
    <property type="entry name" value="NTAQ1"/>
</dbReference>
<dbReference type="InterPro" id="IPR023128">
    <property type="entry name" value="Prot_N_Gln_amidohydro_ab_roll"/>
</dbReference>
<dbReference type="PANTHER" id="PTHR13035">
    <property type="entry name" value="PROTEIN N-TERMINAL GLUTAMINE AMIDOHYDROLASE"/>
    <property type="match status" value="1"/>
</dbReference>
<dbReference type="PANTHER" id="PTHR13035:SF0">
    <property type="entry name" value="PROTEIN N-TERMINAL GLUTAMINE AMIDOHYDROLASE"/>
    <property type="match status" value="1"/>
</dbReference>
<dbReference type="Pfam" id="PF09764">
    <property type="entry name" value="Nt_Gln_amidase"/>
    <property type="match status" value="1"/>
</dbReference>
<gene>
    <name type="ORF">R06C7.6</name>
</gene>